<keyword id="KW-0002">3D-structure</keyword>
<keyword id="KW-0007">Acetylation</keyword>
<keyword id="KW-0597">Phosphoprotein</keyword>
<keyword id="KW-1185">Reference proteome</keyword>
<protein>
    <recommendedName>
        <fullName>Uncharacterized protein YMR074C</fullName>
    </recommendedName>
</protein>
<gene>
    <name type="ordered locus">YMR074C</name>
    <name type="ORF">YM9916.13C</name>
</gene>
<accession>Q04773</accession>
<accession>D6VZP8</accession>
<proteinExistence type="evidence at protein level"/>
<feature type="chain" id="PRO_0000121548" description="Uncharacterized protein YMR074C">
    <location>
        <begin position="1"/>
        <end position="145"/>
    </location>
</feature>
<feature type="region of interest" description="Disordered" evidence="1">
    <location>
        <begin position="15"/>
        <end position="41"/>
    </location>
</feature>
<feature type="region of interest" description="Disordered" evidence="1">
    <location>
        <begin position="125"/>
        <end position="145"/>
    </location>
</feature>
<feature type="compositionally biased region" description="Polar residues" evidence="1">
    <location>
        <begin position="16"/>
        <end position="27"/>
    </location>
</feature>
<feature type="compositionally biased region" description="Acidic residues" evidence="1">
    <location>
        <begin position="135"/>
        <end position="145"/>
    </location>
</feature>
<feature type="modified residue" description="N-acetylmethionine" evidence="6">
    <location>
        <position position="1"/>
    </location>
</feature>
<feature type="modified residue" description="Phosphoserine" evidence="4 5">
    <location>
        <position position="121"/>
    </location>
</feature>
<feature type="modified residue" description="Phosphoserine" evidence="4">
    <location>
        <position position="126"/>
    </location>
</feature>
<feature type="helix" evidence="8">
    <location>
        <begin position="3"/>
        <end position="15"/>
    </location>
</feature>
<feature type="helix" evidence="7">
    <location>
        <begin position="44"/>
        <end position="47"/>
    </location>
</feature>
<feature type="helix" evidence="7">
    <location>
        <begin position="52"/>
        <end position="64"/>
    </location>
</feature>
<feature type="helix" evidence="7">
    <location>
        <begin position="66"/>
        <end position="82"/>
    </location>
</feature>
<feature type="helix" evidence="7">
    <location>
        <begin position="91"/>
        <end position="104"/>
    </location>
</feature>
<evidence type="ECO:0000256" key="1">
    <source>
        <dbReference type="SAM" id="MobiDB-lite"/>
    </source>
</evidence>
<evidence type="ECO:0000269" key="2">
    <source>
    </source>
</evidence>
<evidence type="ECO:0000305" key="3"/>
<evidence type="ECO:0007744" key="4">
    <source>
    </source>
</evidence>
<evidence type="ECO:0007744" key="5">
    <source>
    </source>
</evidence>
<evidence type="ECO:0007744" key="6">
    <source>
    </source>
</evidence>
<evidence type="ECO:0007829" key="7">
    <source>
        <dbReference type="PDB" id="2FH0"/>
    </source>
</evidence>
<evidence type="ECO:0007829" key="8">
    <source>
        <dbReference type="PDB" id="2JXN"/>
    </source>
</evidence>
<sequence>MDPELQAIREARLAQLKNNSGGTNGDRNSGANNGGGENSAPVGAAIANFLEPQALERLSRVALVRRDRAQAVETYLKKLIATNNVTHKITEAEIVSILNGIAKQQNSQNNSKIIFERKDFSEDLNSFDKQNAKNDDDEDDDDFFD</sequence>
<name>YMW4_YEAST</name>
<organism>
    <name type="scientific">Saccharomyces cerevisiae (strain ATCC 204508 / S288c)</name>
    <name type="common">Baker's yeast</name>
    <dbReference type="NCBI Taxonomy" id="559292"/>
    <lineage>
        <taxon>Eukaryota</taxon>
        <taxon>Fungi</taxon>
        <taxon>Dikarya</taxon>
        <taxon>Ascomycota</taxon>
        <taxon>Saccharomycotina</taxon>
        <taxon>Saccharomycetes</taxon>
        <taxon>Saccharomycetales</taxon>
        <taxon>Saccharomycetaceae</taxon>
        <taxon>Saccharomyces</taxon>
    </lineage>
</organism>
<reference key="1">
    <citation type="journal article" date="1997" name="Nature">
        <title>The nucleotide sequence of Saccharomyces cerevisiae chromosome XIII.</title>
        <authorList>
            <person name="Bowman S."/>
            <person name="Churcher C.M."/>
            <person name="Badcock K."/>
            <person name="Brown D."/>
            <person name="Chillingworth T."/>
            <person name="Connor R."/>
            <person name="Dedman K."/>
            <person name="Devlin K."/>
            <person name="Gentles S."/>
            <person name="Hamlin N."/>
            <person name="Hunt S."/>
            <person name="Jagels K."/>
            <person name="Lye G."/>
            <person name="Moule S."/>
            <person name="Odell C."/>
            <person name="Pearson D."/>
            <person name="Rajandream M.A."/>
            <person name="Rice P."/>
            <person name="Skelton J."/>
            <person name="Walsh S.V."/>
            <person name="Whitehead S."/>
            <person name="Barrell B.G."/>
        </authorList>
    </citation>
    <scope>NUCLEOTIDE SEQUENCE [LARGE SCALE GENOMIC DNA]</scope>
    <source>
        <strain>ATCC 204508 / S288c</strain>
    </source>
</reference>
<reference key="2">
    <citation type="journal article" date="2014" name="G3 (Bethesda)">
        <title>The reference genome sequence of Saccharomyces cerevisiae: Then and now.</title>
        <authorList>
            <person name="Engel S.R."/>
            <person name="Dietrich F.S."/>
            <person name="Fisk D.G."/>
            <person name="Binkley G."/>
            <person name="Balakrishnan R."/>
            <person name="Costanzo M.C."/>
            <person name="Dwight S.S."/>
            <person name="Hitz B.C."/>
            <person name="Karra K."/>
            <person name="Nash R.S."/>
            <person name="Weng S."/>
            <person name="Wong E.D."/>
            <person name="Lloyd P."/>
            <person name="Skrzypek M.S."/>
            <person name="Miyasato S.R."/>
            <person name="Simison M."/>
            <person name="Cherry J.M."/>
        </authorList>
    </citation>
    <scope>GENOME REANNOTATION</scope>
    <source>
        <strain>ATCC 204508 / S288c</strain>
    </source>
</reference>
<reference key="3">
    <citation type="journal article" date="2003" name="Nature">
        <title>Global analysis of protein expression in yeast.</title>
        <authorList>
            <person name="Ghaemmaghami S."/>
            <person name="Huh W.-K."/>
            <person name="Bower K."/>
            <person name="Howson R.W."/>
            <person name="Belle A."/>
            <person name="Dephoure N."/>
            <person name="O'Shea E.K."/>
            <person name="Weissman J.S."/>
        </authorList>
    </citation>
    <scope>LEVEL OF PROTEIN EXPRESSION [LARGE SCALE ANALYSIS]</scope>
</reference>
<reference key="4">
    <citation type="journal article" date="2008" name="Mol. Cell. Proteomics">
        <title>A multidimensional chromatography technology for in-depth phosphoproteome analysis.</title>
        <authorList>
            <person name="Albuquerque C.P."/>
            <person name="Smolka M.B."/>
            <person name="Payne S.H."/>
            <person name="Bafna V."/>
            <person name="Eng J."/>
            <person name="Zhou H."/>
        </authorList>
    </citation>
    <scope>PHOSPHORYLATION [LARGE SCALE ANALYSIS] AT SER-121 AND SER-126</scope>
    <scope>IDENTIFICATION BY MASS SPECTROMETRY [LARGE SCALE ANALYSIS]</scope>
</reference>
<reference key="5">
    <citation type="journal article" date="2009" name="Science">
        <title>Global analysis of Cdk1 substrate phosphorylation sites provides insights into evolution.</title>
        <authorList>
            <person name="Holt L.J."/>
            <person name="Tuch B.B."/>
            <person name="Villen J."/>
            <person name="Johnson A.D."/>
            <person name="Gygi S.P."/>
            <person name="Morgan D.O."/>
        </authorList>
    </citation>
    <scope>PHOSPHORYLATION [LARGE SCALE ANALYSIS] AT SER-121</scope>
    <scope>IDENTIFICATION BY MASS SPECTROMETRY [LARGE SCALE ANALYSIS]</scope>
</reference>
<reference key="6">
    <citation type="journal article" date="2012" name="Proc. Natl. Acad. Sci. U.S.A.">
        <title>N-terminal acetylome analyses and functional insights of the N-terminal acetyltransferase NatB.</title>
        <authorList>
            <person name="Van Damme P."/>
            <person name="Lasa M."/>
            <person name="Polevoda B."/>
            <person name="Gazquez C."/>
            <person name="Elosegui-Artola A."/>
            <person name="Kim D.S."/>
            <person name="De Juan-Pardo E."/>
            <person name="Demeyer K."/>
            <person name="Hole K."/>
            <person name="Larrea E."/>
            <person name="Timmerman E."/>
            <person name="Prieto J."/>
            <person name="Arnesen T."/>
            <person name="Sherman F."/>
            <person name="Gevaert K."/>
            <person name="Aldabe R."/>
        </authorList>
    </citation>
    <scope>ACETYLATION [LARGE SCALE ANALYSIS] AT MET-1</scope>
    <scope>IDENTIFICATION BY MASS SPECTROMETRY [LARGE SCALE ANALYSIS]</scope>
</reference>
<comment type="miscellaneous">
    <text evidence="2">Present with 2550 molecules/cell in log phase SD medium.</text>
</comment>
<comment type="similarity">
    <text evidence="3">Belongs to the PDCD5 family.</text>
</comment>
<dbReference type="EMBL" id="Z48952">
    <property type="protein sequence ID" value="CAA88799.1"/>
    <property type="molecule type" value="Genomic_DNA"/>
</dbReference>
<dbReference type="EMBL" id="BK006946">
    <property type="protein sequence ID" value="DAA09972.1"/>
    <property type="molecule type" value="Genomic_DNA"/>
</dbReference>
<dbReference type="PIR" id="S52834">
    <property type="entry name" value="S52834"/>
</dbReference>
<dbReference type="PDB" id="2FH0">
    <property type="method" value="NMR"/>
    <property type="chains" value="A=36-116"/>
</dbReference>
<dbReference type="PDB" id="2JXN">
    <property type="method" value="NMR"/>
    <property type="chains" value="A=1-116"/>
</dbReference>
<dbReference type="PDBsum" id="2FH0"/>
<dbReference type="PDBsum" id="2JXN"/>
<dbReference type="BMRB" id="Q04773"/>
<dbReference type="SMR" id="Q04773"/>
<dbReference type="BioGRID" id="35249">
    <property type="interactions" value="124"/>
</dbReference>
<dbReference type="DIP" id="DIP-5242N"/>
<dbReference type="FunCoup" id="Q04773">
    <property type="interactions" value="475"/>
</dbReference>
<dbReference type="IntAct" id="Q04773">
    <property type="interactions" value="6"/>
</dbReference>
<dbReference type="MINT" id="Q04773"/>
<dbReference type="STRING" id="4932.YMR074C"/>
<dbReference type="iPTMnet" id="Q04773"/>
<dbReference type="PaxDb" id="4932-YMR074C"/>
<dbReference type="PeptideAtlas" id="Q04773"/>
<dbReference type="EnsemblFungi" id="YMR074C_mRNA">
    <property type="protein sequence ID" value="YMR074C"/>
    <property type="gene ID" value="YMR074C"/>
</dbReference>
<dbReference type="KEGG" id="sce:YMR074C"/>
<dbReference type="AGR" id="SGD:S000004678"/>
<dbReference type="SGD" id="S000004678">
    <property type="gene designation" value="YMR074C"/>
</dbReference>
<dbReference type="VEuPathDB" id="FungiDB:YMR074C"/>
<dbReference type="eggNOG" id="KOG3431">
    <property type="taxonomic scope" value="Eukaryota"/>
</dbReference>
<dbReference type="GeneTree" id="ENSGT00390000011085"/>
<dbReference type="HOGENOM" id="CLU_122978_0_0_1"/>
<dbReference type="InParanoid" id="Q04773"/>
<dbReference type="OMA" id="MQYEMQK"/>
<dbReference type="OrthoDB" id="10252486at2759"/>
<dbReference type="BioCyc" id="YEAST:G3O-32776-MONOMER"/>
<dbReference type="BioGRID-ORCS" id="855096">
    <property type="hits" value="0 hits in 10 CRISPR screens"/>
</dbReference>
<dbReference type="EvolutionaryTrace" id="Q04773"/>
<dbReference type="PRO" id="PR:Q04773"/>
<dbReference type="Proteomes" id="UP000002311">
    <property type="component" value="Chromosome XIII"/>
</dbReference>
<dbReference type="RNAct" id="Q04773">
    <property type="molecule type" value="protein"/>
</dbReference>
<dbReference type="GO" id="GO:0005737">
    <property type="term" value="C:cytoplasm"/>
    <property type="evidence" value="ECO:0007005"/>
    <property type="project" value="SGD"/>
</dbReference>
<dbReference type="GO" id="GO:0005829">
    <property type="term" value="C:cytosol"/>
    <property type="evidence" value="ECO:0000318"/>
    <property type="project" value="GO_Central"/>
</dbReference>
<dbReference type="GO" id="GO:0005634">
    <property type="term" value="C:nucleus"/>
    <property type="evidence" value="ECO:0007005"/>
    <property type="project" value="SGD"/>
</dbReference>
<dbReference type="GO" id="GO:0003677">
    <property type="term" value="F:DNA binding"/>
    <property type="evidence" value="ECO:0007669"/>
    <property type="project" value="InterPro"/>
</dbReference>
<dbReference type="GO" id="GO:0006915">
    <property type="term" value="P:apoptotic process"/>
    <property type="evidence" value="ECO:0000315"/>
    <property type="project" value="SGD"/>
</dbReference>
<dbReference type="FunFam" id="1.10.8.140:FF:000008">
    <property type="entry name" value="YMR074C-like protein"/>
    <property type="match status" value="1"/>
</dbReference>
<dbReference type="Gene3D" id="1.10.8.140">
    <property type="entry name" value="PDCD5-like"/>
    <property type="match status" value="1"/>
</dbReference>
<dbReference type="InterPro" id="IPR002836">
    <property type="entry name" value="PDCD5-like"/>
</dbReference>
<dbReference type="InterPro" id="IPR036883">
    <property type="entry name" value="PDCD5-like_sf"/>
</dbReference>
<dbReference type="PANTHER" id="PTHR10840">
    <property type="entry name" value="PROGRAMMED CELL DEATH PROTEIN 5"/>
    <property type="match status" value="1"/>
</dbReference>
<dbReference type="PANTHER" id="PTHR10840:SF0">
    <property type="entry name" value="PROGRAMMED CELL DEATH PROTEIN 5"/>
    <property type="match status" value="1"/>
</dbReference>
<dbReference type="Pfam" id="PF01984">
    <property type="entry name" value="dsDNA_bind"/>
    <property type="match status" value="1"/>
</dbReference>
<dbReference type="PIRSF" id="PIRSF015730">
    <property type="entry name" value="TFAR19"/>
    <property type="match status" value="1"/>
</dbReference>
<dbReference type="SUPFAM" id="SSF46950">
    <property type="entry name" value="Double-stranded DNA-binding domain"/>
    <property type="match status" value="1"/>
</dbReference>